<reference key="1">
    <citation type="journal article" date="1995" name="Gene">
        <title>Expression of the Bombyx mori beta-tubulin-encoding gene in testis.</title>
        <authorList>
            <person name="Mita K."/>
            <person name="Nenoi M."/>
            <person name="Morimyo M."/>
            <person name="Tsuji H."/>
            <person name="Ichimura S."/>
            <person name="Sawai M."/>
            <person name="Hamana K."/>
        </authorList>
    </citation>
    <scope>NUCLEOTIDE SEQUENCE [MRNA]</scope>
    <source>
        <strain>Kinshu X Showa</strain>
        <tissue>Testis</tissue>
    </source>
</reference>
<dbReference type="EMBL" id="X74951">
    <property type="protein sequence ID" value="CAA52906.1"/>
    <property type="molecule type" value="mRNA"/>
</dbReference>
<dbReference type="PIR" id="S37177">
    <property type="entry name" value="S37177"/>
</dbReference>
<dbReference type="RefSeq" id="NP_001037492.1">
    <property type="nucleotide sequence ID" value="NM_001044027.1"/>
</dbReference>
<dbReference type="SMR" id="P41385"/>
<dbReference type="STRING" id="7091.P41385"/>
<dbReference type="PaxDb" id="7091-BGIBMGA003296-TA"/>
<dbReference type="EnsemblMetazoa" id="NM_001044027.1">
    <property type="protein sequence ID" value="NP_001037492.1"/>
    <property type="gene ID" value="LOC693049"/>
</dbReference>
<dbReference type="GeneID" id="693049"/>
<dbReference type="KEGG" id="bmor:693049"/>
<dbReference type="eggNOG" id="KOG1375">
    <property type="taxonomic scope" value="Eukaryota"/>
</dbReference>
<dbReference type="HOGENOM" id="CLU_015718_1_1_1"/>
<dbReference type="InParanoid" id="P41385"/>
<dbReference type="Proteomes" id="UP000005204">
    <property type="component" value="Unassembled WGS sequence"/>
</dbReference>
<dbReference type="GO" id="GO:0005737">
    <property type="term" value="C:cytoplasm"/>
    <property type="evidence" value="ECO:0007669"/>
    <property type="project" value="UniProtKB-KW"/>
</dbReference>
<dbReference type="GO" id="GO:0005874">
    <property type="term" value="C:microtubule"/>
    <property type="evidence" value="ECO:0007669"/>
    <property type="project" value="UniProtKB-KW"/>
</dbReference>
<dbReference type="GO" id="GO:0005525">
    <property type="term" value="F:GTP binding"/>
    <property type="evidence" value="ECO:0007669"/>
    <property type="project" value="UniProtKB-KW"/>
</dbReference>
<dbReference type="GO" id="GO:0003924">
    <property type="term" value="F:GTPase activity"/>
    <property type="evidence" value="ECO:0007669"/>
    <property type="project" value="InterPro"/>
</dbReference>
<dbReference type="GO" id="GO:0046872">
    <property type="term" value="F:metal ion binding"/>
    <property type="evidence" value="ECO:0007669"/>
    <property type="project" value="UniProtKB-KW"/>
</dbReference>
<dbReference type="GO" id="GO:0005200">
    <property type="term" value="F:structural constituent of cytoskeleton"/>
    <property type="evidence" value="ECO:0007669"/>
    <property type="project" value="InterPro"/>
</dbReference>
<dbReference type="GO" id="GO:0007017">
    <property type="term" value="P:microtubule-based process"/>
    <property type="evidence" value="ECO:0007669"/>
    <property type="project" value="InterPro"/>
</dbReference>
<dbReference type="CDD" id="cd02187">
    <property type="entry name" value="beta_tubulin"/>
    <property type="match status" value="1"/>
</dbReference>
<dbReference type="FunFam" id="1.10.287.600:FF:000013">
    <property type="entry name" value="Tubulin beta chain"/>
    <property type="match status" value="1"/>
</dbReference>
<dbReference type="FunFam" id="3.30.1330.20:FF:000002">
    <property type="entry name" value="Tubulin beta chain"/>
    <property type="match status" value="1"/>
</dbReference>
<dbReference type="FunFam" id="3.40.50.1440:FF:000006">
    <property type="entry name" value="Tubulin beta chain"/>
    <property type="match status" value="1"/>
</dbReference>
<dbReference type="Gene3D" id="1.10.287.600">
    <property type="entry name" value="Helix hairpin bin"/>
    <property type="match status" value="1"/>
</dbReference>
<dbReference type="Gene3D" id="3.30.1330.20">
    <property type="entry name" value="Tubulin/FtsZ, C-terminal domain"/>
    <property type="match status" value="1"/>
</dbReference>
<dbReference type="Gene3D" id="3.40.50.1440">
    <property type="entry name" value="Tubulin/FtsZ, GTPase domain"/>
    <property type="match status" value="1"/>
</dbReference>
<dbReference type="InterPro" id="IPR013838">
    <property type="entry name" value="Beta-tubulin_BS"/>
</dbReference>
<dbReference type="InterPro" id="IPR002453">
    <property type="entry name" value="Beta_tubulin"/>
</dbReference>
<dbReference type="InterPro" id="IPR008280">
    <property type="entry name" value="Tub_FtsZ_C"/>
</dbReference>
<dbReference type="InterPro" id="IPR000217">
    <property type="entry name" value="Tubulin"/>
</dbReference>
<dbReference type="InterPro" id="IPR037103">
    <property type="entry name" value="Tubulin/FtsZ-like_C"/>
</dbReference>
<dbReference type="InterPro" id="IPR018316">
    <property type="entry name" value="Tubulin/FtsZ_2-layer-sand-dom"/>
</dbReference>
<dbReference type="InterPro" id="IPR036525">
    <property type="entry name" value="Tubulin/FtsZ_GTPase_sf"/>
</dbReference>
<dbReference type="InterPro" id="IPR023123">
    <property type="entry name" value="Tubulin_C"/>
</dbReference>
<dbReference type="InterPro" id="IPR017975">
    <property type="entry name" value="Tubulin_CS"/>
</dbReference>
<dbReference type="InterPro" id="IPR003008">
    <property type="entry name" value="Tubulin_FtsZ_GTPase"/>
</dbReference>
<dbReference type="PANTHER" id="PTHR11588">
    <property type="entry name" value="TUBULIN"/>
    <property type="match status" value="1"/>
</dbReference>
<dbReference type="Pfam" id="PF00091">
    <property type="entry name" value="Tubulin"/>
    <property type="match status" value="1"/>
</dbReference>
<dbReference type="Pfam" id="PF03953">
    <property type="entry name" value="Tubulin_C"/>
    <property type="match status" value="1"/>
</dbReference>
<dbReference type="PRINTS" id="PR01163">
    <property type="entry name" value="BETATUBULIN"/>
</dbReference>
<dbReference type="PRINTS" id="PR01161">
    <property type="entry name" value="TUBULIN"/>
</dbReference>
<dbReference type="SMART" id="SM00864">
    <property type="entry name" value="Tubulin"/>
    <property type="match status" value="1"/>
</dbReference>
<dbReference type="SMART" id="SM00865">
    <property type="entry name" value="Tubulin_C"/>
    <property type="match status" value="1"/>
</dbReference>
<dbReference type="SUPFAM" id="SSF55307">
    <property type="entry name" value="Tubulin C-terminal domain-like"/>
    <property type="match status" value="1"/>
</dbReference>
<dbReference type="SUPFAM" id="SSF52490">
    <property type="entry name" value="Tubulin nucleotide-binding domain-like"/>
    <property type="match status" value="1"/>
</dbReference>
<dbReference type="PROSITE" id="PS00227">
    <property type="entry name" value="TUBULIN"/>
    <property type="match status" value="1"/>
</dbReference>
<dbReference type="PROSITE" id="PS00228">
    <property type="entry name" value="TUBULIN_B_AUTOREG"/>
    <property type="match status" value="1"/>
</dbReference>
<protein>
    <recommendedName>
        <fullName>Tubulin beta chain</fullName>
    </recommendedName>
    <alternativeName>
        <fullName>Beta-tubulin</fullName>
    </alternativeName>
</protein>
<feature type="chain" id="PRO_0000048275" description="Tubulin beta chain">
    <location>
        <begin position="1"/>
        <end position="450"/>
    </location>
</feature>
<feature type="region of interest" description="Disordered" evidence="3">
    <location>
        <begin position="427"/>
        <end position="450"/>
    </location>
</feature>
<feature type="compositionally biased region" description="Acidic residues" evidence="3">
    <location>
        <begin position="430"/>
        <end position="450"/>
    </location>
</feature>
<feature type="binding site" evidence="1">
    <location>
        <position position="69"/>
    </location>
    <ligand>
        <name>GTP</name>
        <dbReference type="ChEBI" id="CHEBI:37565"/>
    </ligand>
</feature>
<feature type="binding site" evidence="1">
    <location>
        <position position="69"/>
    </location>
    <ligand>
        <name>Mg(2+)</name>
        <dbReference type="ChEBI" id="CHEBI:18420"/>
    </ligand>
</feature>
<feature type="binding site" evidence="2">
    <location>
        <position position="138"/>
    </location>
    <ligand>
        <name>GTP</name>
        <dbReference type="ChEBI" id="CHEBI:37565"/>
    </ligand>
</feature>
<feature type="binding site" evidence="2">
    <location>
        <position position="142"/>
    </location>
    <ligand>
        <name>GTP</name>
        <dbReference type="ChEBI" id="CHEBI:37565"/>
    </ligand>
</feature>
<feature type="binding site" evidence="2">
    <location>
        <position position="143"/>
    </location>
    <ligand>
        <name>GTP</name>
        <dbReference type="ChEBI" id="CHEBI:37565"/>
    </ligand>
</feature>
<feature type="binding site" evidence="2">
    <location>
        <position position="144"/>
    </location>
    <ligand>
        <name>GTP</name>
        <dbReference type="ChEBI" id="CHEBI:37565"/>
    </ligand>
</feature>
<feature type="binding site" evidence="2">
    <location>
        <position position="204"/>
    </location>
    <ligand>
        <name>GTP</name>
        <dbReference type="ChEBI" id="CHEBI:37565"/>
    </ligand>
</feature>
<feature type="binding site" evidence="2">
    <location>
        <position position="226"/>
    </location>
    <ligand>
        <name>GTP</name>
        <dbReference type="ChEBI" id="CHEBI:37565"/>
    </ligand>
</feature>
<sequence length="450" mass="50335">MREIVHVQVGRCGNQIGSKFWEVISDEHGIDPCGRYHGDSDLQLERINVYYNEAFGAKYVPRAVLVDLEPSTMDSIRGGPYGSLYRPDNVVCGASGAGNNWAKGHYTEGADLLETVLDVVRKEAEGCDCLQGFQLVHSLGGGTGSGMGTLLLANLTDEYPDRITATYSVVPSPTVSETVVEPYNATLSVNQLIENSIQSYCIDNEALYYICHRTLKLMAPTYGALNHLVSLTMSGVTTCLRFPGQLNADLRKLAVNMIPFPRLHFFMPGFAPLTSRGSQQYRALTVPELTQQMFDAKNMMAACDPHRGRYLTVATVFRGRMSMKEIDEQILNVQKKNKDFFVEWIPNNVQTAVCDIPPRGMKMSATFIGNTTAIQEIFKRISEQFAAMFSRKAFLHWYTGEGMEEGDFAEADNNVSDLLSEYQQYQDATIDQEFEDEEEVEEQNDDSDEQ</sequence>
<name>TBB_BOMMO</name>
<accession>P41385</accession>
<proteinExistence type="evidence at transcript level"/>
<keyword id="KW-0963">Cytoplasm</keyword>
<keyword id="KW-0206">Cytoskeleton</keyword>
<keyword id="KW-0342">GTP-binding</keyword>
<keyword id="KW-0460">Magnesium</keyword>
<keyword id="KW-0479">Metal-binding</keyword>
<keyword id="KW-0493">Microtubule</keyword>
<keyword id="KW-0547">Nucleotide-binding</keyword>
<keyword id="KW-1185">Reference proteome</keyword>
<evidence type="ECO:0000250" key="1">
    <source>
        <dbReference type="UniProtKB" id="P68363"/>
    </source>
</evidence>
<evidence type="ECO:0000250" key="2">
    <source>
        <dbReference type="UniProtKB" id="Q13509"/>
    </source>
</evidence>
<evidence type="ECO:0000256" key="3">
    <source>
        <dbReference type="SAM" id="MobiDB-lite"/>
    </source>
</evidence>
<evidence type="ECO:0000305" key="4"/>
<comment type="function">
    <text>Tubulin is the major constituent of microtubules, a cylinder consisting of laterally associated linear protofilaments composed of alpha- and beta-tubulin heterodimers. Microtubules grow by the addition of GTP-tubulin dimers to the microtubule end, where a stabilizing cap forms. Below the cap, tubulin dimers are in GDP-bound state, owing to GTPase activity of alpha-tubulin.</text>
</comment>
<comment type="cofactor">
    <cofactor evidence="1">
        <name>Mg(2+)</name>
        <dbReference type="ChEBI" id="CHEBI:18420"/>
    </cofactor>
</comment>
<comment type="subunit">
    <text>Dimer of alpha and beta chains. A typical microtubule is a hollow water-filled tube with an outer diameter of 25 nm and an inner diameter of 15 nM. Alpha-beta heterodimers associate head-to-tail to form protofilaments running lengthwise along the microtubule wall with the beta-tubulin subunit facing the microtubule plus end conferring a structural polarity. Microtubules usually have 13 protofilaments but different protofilament numbers can be found in some organisms and specialized cells.</text>
</comment>
<comment type="subcellular location">
    <subcellularLocation>
        <location>Cytoplasm</location>
        <location>Cytoskeleton</location>
    </subcellularLocation>
</comment>
<comment type="similarity">
    <text evidence="4">Belongs to the tubulin family.</text>
</comment>
<organism>
    <name type="scientific">Bombyx mori</name>
    <name type="common">Silk moth</name>
    <dbReference type="NCBI Taxonomy" id="7091"/>
    <lineage>
        <taxon>Eukaryota</taxon>
        <taxon>Metazoa</taxon>
        <taxon>Ecdysozoa</taxon>
        <taxon>Arthropoda</taxon>
        <taxon>Hexapoda</taxon>
        <taxon>Insecta</taxon>
        <taxon>Pterygota</taxon>
        <taxon>Neoptera</taxon>
        <taxon>Endopterygota</taxon>
        <taxon>Lepidoptera</taxon>
        <taxon>Glossata</taxon>
        <taxon>Ditrysia</taxon>
        <taxon>Bombycoidea</taxon>
        <taxon>Bombycidae</taxon>
        <taxon>Bombycinae</taxon>
        <taxon>Bombyx</taxon>
    </lineage>
</organism>